<organism>
    <name type="scientific">Mycobacterium tuberculosis (strain CDC 1551 / Oshkosh)</name>
    <dbReference type="NCBI Taxonomy" id="83331"/>
    <lineage>
        <taxon>Bacteria</taxon>
        <taxon>Bacillati</taxon>
        <taxon>Actinomycetota</taxon>
        <taxon>Actinomycetes</taxon>
        <taxon>Mycobacteriales</taxon>
        <taxon>Mycobacteriaceae</taxon>
        <taxon>Mycobacterium</taxon>
        <taxon>Mycobacterium tuberculosis complex</taxon>
    </lineage>
</organism>
<sequence length="463" mass="46895">MAIPPEVHSGLLSAGCGPGSLLVAAQQWQELSDQYALACAELGQLLGEVQASSWQGTAATQYVAAHGPYLAWLEQTAINSAVTAAQHVAAAAAYCSALAAMPTPAELAANHAIHGVLIATNFFGINTVPIALNEADYVRMWLQAADTMAAYQAVADAATVAVPSTQPAPPIRAPGGDAADTRLDVLSSIGQLIRDILDFIANPYKYFLEFFEQFGFSPAVTVVLALVALQLYDFLWYPYYASYGLLLLPFFTPTLSALTALSALIHLLNLPPAGLLPIAAALGPGDQWGANLAVAVTPATAAVPGGSPPTSNPAPAAPSSNSVGSASAAPGISYAVPGLAPPGVSSGPKAGTKSPDTAADTLATAGAARPGLARAHRRKRSESGVGIRGYRDEFLDATATVDAATDVPAPANAAGSQGAGTLGFAGTAPTTSGAAAGMVQLSSHSTSTTVPLLPTTWTTDAEQ</sequence>
<comment type="subcellular location">
    <subcellularLocation>
        <location evidence="3">Cell membrane</location>
        <topology evidence="3">Multi-pass membrane protein</topology>
    </subcellularLocation>
</comment>
<comment type="similarity">
    <text evidence="3">Belongs to the mycobacterial PPE family.</text>
</comment>
<gene>
    <name type="primary">PPE1</name>
    <name type="ordered locus">MT0105</name>
</gene>
<evidence type="ECO:0000255" key="1"/>
<evidence type="ECO:0000256" key="2">
    <source>
        <dbReference type="SAM" id="MobiDB-lite"/>
    </source>
</evidence>
<evidence type="ECO:0000305" key="3"/>
<proteinExistence type="inferred from homology"/>
<name>PPE01_MYCTO</name>
<reference key="1">
    <citation type="journal article" date="2002" name="J. Bacteriol.">
        <title>Whole-genome comparison of Mycobacterium tuberculosis clinical and laboratory strains.</title>
        <authorList>
            <person name="Fleischmann R.D."/>
            <person name="Alland D."/>
            <person name="Eisen J.A."/>
            <person name="Carpenter L."/>
            <person name="White O."/>
            <person name="Peterson J.D."/>
            <person name="DeBoy R.T."/>
            <person name="Dodson R.J."/>
            <person name="Gwinn M.L."/>
            <person name="Haft D.H."/>
            <person name="Hickey E.K."/>
            <person name="Kolonay J.F."/>
            <person name="Nelson W.C."/>
            <person name="Umayam L.A."/>
            <person name="Ermolaeva M.D."/>
            <person name="Salzberg S.L."/>
            <person name="Delcher A."/>
            <person name="Utterback T.R."/>
            <person name="Weidman J.F."/>
            <person name="Khouri H.M."/>
            <person name="Gill J."/>
            <person name="Mikula A."/>
            <person name="Bishai W."/>
            <person name="Jacobs W.R. Jr."/>
            <person name="Venter J.C."/>
            <person name="Fraser C.M."/>
        </authorList>
    </citation>
    <scope>NUCLEOTIDE SEQUENCE [LARGE SCALE GENOMIC DNA]</scope>
    <source>
        <strain>CDC 1551 / Oshkosh</strain>
    </source>
</reference>
<protein>
    <recommendedName>
        <fullName>Uncharacterized PPE family protein PPE1</fullName>
    </recommendedName>
</protein>
<accession>P9WI48</accession>
<accession>L0T5N5</accession>
<accession>Q10892</accession>
<dbReference type="EMBL" id="AE000516">
    <property type="protein sequence ID" value="AAK44327.1"/>
    <property type="molecule type" value="Genomic_DNA"/>
</dbReference>
<dbReference type="PIR" id="H70750">
    <property type="entry name" value="H70750"/>
</dbReference>
<dbReference type="RefSeq" id="WP_003400781.1">
    <property type="nucleotide sequence ID" value="NZ_KK341227.1"/>
</dbReference>
<dbReference type="SMR" id="P9WI48"/>
<dbReference type="KEGG" id="mtc:MT0105"/>
<dbReference type="PATRIC" id="fig|83331.31.peg.110"/>
<dbReference type="HOGENOM" id="CLU_000243_5_2_11"/>
<dbReference type="Proteomes" id="UP000001020">
    <property type="component" value="Chromosome"/>
</dbReference>
<dbReference type="GO" id="GO:0005886">
    <property type="term" value="C:plasma membrane"/>
    <property type="evidence" value="ECO:0007669"/>
    <property type="project" value="UniProtKB-SubCell"/>
</dbReference>
<dbReference type="GO" id="GO:0052572">
    <property type="term" value="P:response to host immune response"/>
    <property type="evidence" value="ECO:0007669"/>
    <property type="project" value="TreeGrafter"/>
</dbReference>
<dbReference type="Gene3D" id="1.20.1260.20">
    <property type="entry name" value="PPE superfamily"/>
    <property type="match status" value="1"/>
</dbReference>
<dbReference type="InterPro" id="IPR043641">
    <property type="entry name" value="PPE-PPW_C"/>
</dbReference>
<dbReference type="InterPro" id="IPR000030">
    <property type="entry name" value="PPE_dom"/>
</dbReference>
<dbReference type="InterPro" id="IPR038332">
    <property type="entry name" value="PPE_sf"/>
</dbReference>
<dbReference type="PANTHER" id="PTHR46766">
    <property type="entry name" value="GLUTAMINE-RICH PROTEIN 2"/>
    <property type="match status" value="1"/>
</dbReference>
<dbReference type="PANTHER" id="PTHR46766:SF1">
    <property type="entry name" value="GLUTAMINE-RICH PROTEIN 2"/>
    <property type="match status" value="1"/>
</dbReference>
<dbReference type="Pfam" id="PF00823">
    <property type="entry name" value="PPE"/>
    <property type="match status" value="1"/>
</dbReference>
<dbReference type="Pfam" id="PF18878">
    <property type="entry name" value="PPE-PPW"/>
    <property type="match status" value="1"/>
</dbReference>
<dbReference type="SUPFAM" id="SSF140459">
    <property type="entry name" value="PE/PPE dimer-like"/>
    <property type="match status" value="1"/>
</dbReference>
<keyword id="KW-1003">Cell membrane</keyword>
<keyword id="KW-0472">Membrane</keyword>
<keyword id="KW-1185">Reference proteome</keyword>
<keyword id="KW-0812">Transmembrane</keyword>
<keyword id="KW-1133">Transmembrane helix</keyword>
<feature type="chain" id="PRO_0000428069" description="Uncharacterized PPE family protein PPE1">
    <location>
        <begin position="1"/>
        <end position="463"/>
    </location>
</feature>
<feature type="transmembrane region" description="Helical" evidence="1">
    <location>
        <begin position="3"/>
        <end position="23"/>
    </location>
</feature>
<feature type="transmembrane region" description="Helical" evidence="1">
    <location>
        <begin position="88"/>
        <end position="108"/>
    </location>
</feature>
<feature type="transmembrane region" description="Helical" evidence="1">
    <location>
        <begin position="112"/>
        <end position="132"/>
    </location>
</feature>
<feature type="transmembrane region" description="Helical" evidence="1">
    <location>
        <begin position="216"/>
        <end position="236"/>
    </location>
</feature>
<feature type="transmembrane region" description="Helical" evidence="1">
    <location>
        <begin position="245"/>
        <end position="265"/>
    </location>
</feature>
<feature type="transmembrane region" description="Helical" evidence="1">
    <location>
        <begin position="276"/>
        <end position="296"/>
    </location>
</feature>
<feature type="transmembrane region" description="Helical" evidence="1">
    <location>
        <begin position="323"/>
        <end position="343"/>
    </location>
</feature>
<feature type="transmembrane region" description="Helical" evidence="1">
    <location>
        <begin position="419"/>
        <end position="439"/>
    </location>
</feature>
<feature type="region of interest" description="Disordered" evidence="2">
    <location>
        <begin position="303"/>
        <end position="322"/>
    </location>
</feature>
<feature type="compositionally biased region" description="Pro residues" evidence="2">
    <location>
        <begin position="306"/>
        <end position="316"/>
    </location>
</feature>